<accession>Q87DM8</accession>
<dbReference type="EC" id="2.6.1.11" evidence="1"/>
<dbReference type="EMBL" id="AE009442">
    <property type="protein sequence ID" value="AAO28525.1"/>
    <property type="molecule type" value="Genomic_DNA"/>
</dbReference>
<dbReference type="RefSeq" id="WP_004089174.1">
    <property type="nucleotide sequence ID" value="NC_004556.1"/>
</dbReference>
<dbReference type="SMR" id="Q87DM8"/>
<dbReference type="KEGG" id="xft:PD_0654"/>
<dbReference type="HOGENOM" id="CLU_016922_10_1_6"/>
<dbReference type="UniPathway" id="UPA00068">
    <property type="reaction ID" value="UER00109"/>
</dbReference>
<dbReference type="Proteomes" id="UP000002516">
    <property type="component" value="Chromosome"/>
</dbReference>
<dbReference type="GO" id="GO:0005737">
    <property type="term" value="C:cytoplasm"/>
    <property type="evidence" value="ECO:0007669"/>
    <property type="project" value="UniProtKB-SubCell"/>
</dbReference>
<dbReference type="GO" id="GO:0042802">
    <property type="term" value="F:identical protein binding"/>
    <property type="evidence" value="ECO:0007669"/>
    <property type="project" value="TreeGrafter"/>
</dbReference>
<dbReference type="GO" id="GO:0003992">
    <property type="term" value="F:N2-acetyl-L-ornithine:2-oxoglutarate 5-aminotransferase activity"/>
    <property type="evidence" value="ECO:0007669"/>
    <property type="project" value="UniProtKB-UniRule"/>
</dbReference>
<dbReference type="GO" id="GO:0030170">
    <property type="term" value="F:pyridoxal phosphate binding"/>
    <property type="evidence" value="ECO:0007669"/>
    <property type="project" value="InterPro"/>
</dbReference>
<dbReference type="GO" id="GO:0006526">
    <property type="term" value="P:L-arginine biosynthetic process"/>
    <property type="evidence" value="ECO:0007669"/>
    <property type="project" value="UniProtKB-UniRule"/>
</dbReference>
<dbReference type="CDD" id="cd00610">
    <property type="entry name" value="OAT_like"/>
    <property type="match status" value="1"/>
</dbReference>
<dbReference type="FunFam" id="3.40.640.10:FF:000117">
    <property type="entry name" value="Acetylornithine aminotransferase"/>
    <property type="match status" value="1"/>
</dbReference>
<dbReference type="Gene3D" id="3.90.1150.10">
    <property type="entry name" value="Aspartate Aminotransferase, domain 1"/>
    <property type="match status" value="1"/>
</dbReference>
<dbReference type="Gene3D" id="3.40.640.10">
    <property type="entry name" value="Type I PLP-dependent aspartate aminotransferase-like (Major domain)"/>
    <property type="match status" value="1"/>
</dbReference>
<dbReference type="HAMAP" id="MF_01107">
    <property type="entry name" value="ArgD_aminotrans_3"/>
    <property type="match status" value="1"/>
</dbReference>
<dbReference type="InterPro" id="IPR004636">
    <property type="entry name" value="AcOrn/SuccOrn_fam"/>
</dbReference>
<dbReference type="InterPro" id="IPR005814">
    <property type="entry name" value="Aminotrans_3"/>
</dbReference>
<dbReference type="InterPro" id="IPR049704">
    <property type="entry name" value="Aminotrans_3_PPA_site"/>
</dbReference>
<dbReference type="InterPro" id="IPR050103">
    <property type="entry name" value="Class-III_PLP-dep_AT"/>
</dbReference>
<dbReference type="InterPro" id="IPR015424">
    <property type="entry name" value="PyrdxlP-dep_Trfase"/>
</dbReference>
<dbReference type="InterPro" id="IPR015421">
    <property type="entry name" value="PyrdxlP-dep_Trfase_major"/>
</dbReference>
<dbReference type="InterPro" id="IPR015422">
    <property type="entry name" value="PyrdxlP-dep_Trfase_small"/>
</dbReference>
<dbReference type="NCBIfam" id="TIGR00707">
    <property type="entry name" value="argD"/>
    <property type="match status" value="1"/>
</dbReference>
<dbReference type="NCBIfam" id="NF002325">
    <property type="entry name" value="PRK01278.1"/>
    <property type="match status" value="1"/>
</dbReference>
<dbReference type="NCBIfam" id="NF003397">
    <property type="entry name" value="PRK04612.1"/>
    <property type="match status" value="1"/>
</dbReference>
<dbReference type="PANTHER" id="PTHR11986">
    <property type="entry name" value="AMINOTRANSFERASE CLASS III"/>
    <property type="match status" value="1"/>
</dbReference>
<dbReference type="PANTHER" id="PTHR11986:SF113">
    <property type="entry name" value="SUCCINYLORNITHINE TRANSAMINASE"/>
    <property type="match status" value="1"/>
</dbReference>
<dbReference type="Pfam" id="PF00202">
    <property type="entry name" value="Aminotran_3"/>
    <property type="match status" value="1"/>
</dbReference>
<dbReference type="PIRSF" id="PIRSF000521">
    <property type="entry name" value="Transaminase_4ab_Lys_Orn"/>
    <property type="match status" value="1"/>
</dbReference>
<dbReference type="SUPFAM" id="SSF53383">
    <property type="entry name" value="PLP-dependent transferases"/>
    <property type="match status" value="1"/>
</dbReference>
<dbReference type="PROSITE" id="PS00600">
    <property type="entry name" value="AA_TRANSFER_CLASS_3"/>
    <property type="match status" value="1"/>
</dbReference>
<feature type="chain" id="PRO_0000112816" description="Acetylornithine aminotransferase">
    <location>
        <begin position="1"/>
        <end position="411"/>
    </location>
</feature>
<feature type="binding site" evidence="1">
    <location>
        <begin position="107"/>
        <end position="108"/>
    </location>
    <ligand>
        <name>pyridoxal 5'-phosphate</name>
        <dbReference type="ChEBI" id="CHEBI:597326"/>
    </ligand>
</feature>
<feature type="binding site" evidence="1">
    <location>
        <position position="141"/>
    </location>
    <ligand>
        <name>pyridoxal 5'-phosphate</name>
        <dbReference type="ChEBI" id="CHEBI:597326"/>
    </ligand>
</feature>
<feature type="binding site" evidence="1">
    <location>
        <position position="144"/>
    </location>
    <ligand>
        <name>N(2)-acetyl-L-ornithine</name>
        <dbReference type="ChEBI" id="CHEBI:57805"/>
    </ligand>
</feature>
<feature type="binding site" evidence="1">
    <location>
        <begin position="227"/>
        <end position="230"/>
    </location>
    <ligand>
        <name>pyridoxal 5'-phosphate</name>
        <dbReference type="ChEBI" id="CHEBI:597326"/>
    </ligand>
</feature>
<feature type="binding site" evidence="1">
    <location>
        <position position="284"/>
    </location>
    <ligand>
        <name>N(2)-acetyl-L-ornithine</name>
        <dbReference type="ChEBI" id="CHEBI:57805"/>
    </ligand>
</feature>
<feature type="binding site" evidence="1">
    <location>
        <position position="285"/>
    </location>
    <ligand>
        <name>pyridoxal 5'-phosphate</name>
        <dbReference type="ChEBI" id="CHEBI:597326"/>
    </ligand>
</feature>
<feature type="modified residue" description="N6-(pyridoxal phosphate)lysine" evidence="1">
    <location>
        <position position="256"/>
    </location>
</feature>
<protein>
    <recommendedName>
        <fullName evidence="1">Acetylornithine aminotransferase</fullName>
        <shortName evidence="1">ACOAT</shortName>
        <ecNumber evidence="1">2.6.1.11</ecNumber>
    </recommendedName>
</protein>
<keyword id="KW-0028">Amino-acid biosynthesis</keyword>
<keyword id="KW-0032">Aminotransferase</keyword>
<keyword id="KW-0055">Arginine biosynthesis</keyword>
<keyword id="KW-0963">Cytoplasm</keyword>
<keyword id="KW-0663">Pyridoxal phosphate</keyword>
<keyword id="KW-1185">Reference proteome</keyword>
<keyword id="KW-0808">Transferase</keyword>
<name>ARGD_XYLFT</name>
<reference key="1">
    <citation type="journal article" date="2003" name="J. Bacteriol.">
        <title>Comparative analyses of the complete genome sequences of Pierce's disease and citrus variegated chlorosis strains of Xylella fastidiosa.</title>
        <authorList>
            <person name="Van Sluys M.A."/>
            <person name="de Oliveira M.C."/>
            <person name="Monteiro-Vitorello C.B."/>
            <person name="Miyaki C.Y."/>
            <person name="Furlan L.R."/>
            <person name="Camargo L.E.A."/>
            <person name="da Silva A.C.R."/>
            <person name="Moon D.H."/>
            <person name="Takita M.A."/>
            <person name="Lemos E.G.M."/>
            <person name="Machado M.A."/>
            <person name="Ferro M.I.T."/>
            <person name="da Silva F.R."/>
            <person name="Goldman M.H.S."/>
            <person name="Goldman G.H."/>
            <person name="Lemos M.V.F."/>
            <person name="El-Dorry H."/>
            <person name="Tsai S.M."/>
            <person name="Carrer H."/>
            <person name="Carraro D.M."/>
            <person name="de Oliveira R.C."/>
            <person name="Nunes L.R."/>
            <person name="Siqueira W.J."/>
            <person name="Coutinho L.L."/>
            <person name="Kimura E.T."/>
            <person name="Ferro E.S."/>
            <person name="Harakava R."/>
            <person name="Kuramae E.E."/>
            <person name="Marino C.L."/>
            <person name="Giglioti E."/>
            <person name="Abreu I.L."/>
            <person name="Alves L.M.C."/>
            <person name="do Amaral A.M."/>
            <person name="Baia G.S."/>
            <person name="Blanco S.R."/>
            <person name="Brito M.S."/>
            <person name="Cannavan F.S."/>
            <person name="Celestino A.V."/>
            <person name="da Cunha A.F."/>
            <person name="Fenille R.C."/>
            <person name="Ferro J.A."/>
            <person name="Formighieri E.F."/>
            <person name="Kishi L.T."/>
            <person name="Leoni S.G."/>
            <person name="Oliveira A.R."/>
            <person name="Rosa V.E. Jr."/>
            <person name="Sassaki F.T."/>
            <person name="Sena J.A.D."/>
            <person name="de Souza A.A."/>
            <person name="Truffi D."/>
            <person name="Tsukumo F."/>
            <person name="Yanai G.M."/>
            <person name="Zaros L.G."/>
            <person name="Civerolo E.L."/>
            <person name="Simpson A.J.G."/>
            <person name="Almeida N.F. Jr."/>
            <person name="Setubal J.C."/>
            <person name="Kitajima J.P."/>
        </authorList>
    </citation>
    <scope>NUCLEOTIDE SEQUENCE [LARGE SCALE GENOMIC DNA]</scope>
    <source>
        <strain>Temecula1 / ATCC 700964</strain>
    </source>
</reference>
<organism>
    <name type="scientific">Xylella fastidiosa (strain Temecula1 / ATCC 700964)</name>
    <dbReference type="NCBI Taxonomy" id="183190"/>
    <lineage>
        <taxon>Bacteria</taxon>
        <taxon>Pseudomonadati</taxon>
        <taxon>Pseudomonadota</taxon>
        <taxon>Gammaproteobacteria</taxon>
        <taxon>Lysobacterales</taxon>
        <taxon>Lysobacteraceae</taxon>
        <taxon>Xylella</taxon>
    </lineage>
</organism>
<sequence length="411" mass="43772">MSAVSESVLSLSRYYLPVYRPCQVVLVRGQGSRVWDEQGRDYLDLAAGIAVCCLGHCDPDLVAALVEQAGRLWHTSNVFYSEPSLRLAQELVDVSRFAERVFLCSSGTEANEAAIKLVRKWAAAQGRLPEHRTIVTFRGSFHGRTLGAVTATAQPKYQEGYEPLPGGFRYVDFNHIEALEAAMVGGDVAAVMLEPIQGEGGVMPIAPGYLAQVRALCDRYGALLVLDEIQCGMGRTGTLFAYWQEEVVPDIVTLAKGLGGGFPIGAMLAGPKVAEVMQFGAHGTTFGGNPMAAAVARVALRKLASVEIAANVQRQSVALRAGLEEISEAFGGVFTQVRGRGLMLGAVLAPLYAGQASAILEVAAEHGVLLLQAGPDVLRFVPALNVSDEELADGLVRLRAALGDYVSRCRG</sequence>
<proteinExistence type="inferred from homology"/>
<comment type="catalytic activity">
    <reaction evidence="1">
        <text>N(2)-acetyl-L-ornithine + 2-oxoglutarate = N-acetyl-L-glutamate 5-semialdehyde + L-glutamate</text>
        <dbReference type="Rhea" id="RHEA:18049"/>
        <dbReference type="ChEBI" id="CHEBI:16810"/>
        <dbReference type="ChEBI" id="CHEBI:29123"/>
        <dbReference type="ChEBI" id="CHEBI:29985"/>
        <dbReference type="ChEBI" id="CHEBI:57805"/>
        <dbReference type="EC" id="2.6.1.11"/>
    </reaction>
</comment>
<comment type="cofactor">
    <cofactor evidence="1">
        <name>pyridoxal 5'-phosphate</name>
        <dbReference type="ChEBI" id="CHEBI:597326"/>
    </cofactor>
    <text evidence="1">Binds 1 pyridoxal phosphate per subunit.</text>
</comment>
<comment type="pathway">
    <text evidence="1">Amino-acid biosynthesis; L-arginine biosynthesis; N(2)-acetyl-L-ornithine from L-glutamate: step 4/4.</text>
</comment>
<comment type="subunit">
    <text evidence="1">Homodimer.</text>
</comment>
<comment type="subcellular location">
    <subcellularLocation>
        <location evidence="1">Cytoplasm</location>
    </subcellularLocation>
</comment>
<comment type="miscellaneous">
    <text evidence="1">May also have succinyldiaminopimelate aminotransferase activity, thus carrying out the corresponding step in lysine biosynthesis.</text>
</comment>
<comment type="similarity">
    <text evidence="1">Belongs to the class-III pyridoxal-phosphate-dependent aminotransferase family. ArgD subfamily.</text>
</comment>
<gene>
    <name evidence="1" type="primary">argD</name>
    <name type="ordered locus">PD_0654</name>
</gene>
<evidence type="ECO:0000255" key="1">
    <source>
        <dbReference type="HAMAP-Rule" id="MF_01107"/>
    </source>
</evidence>